<accession>C0HJU4</accession>
<name>PLIG_CRODO</name>
<evidence type="ECO:0000250" key="1">
    <source>
        <dbReference type="UniProtKB" id="Q7LZI1"/>
    </source>
</evidence>
<evidence type="ECO:0000250" key="2">
    <source>
        <dbReference type="UniProtKB" id="Q90358"/>
    </source>
</evidence>
<evidence type="ECO:0000269" key="3">
    <source>
    </source>
</evidence>
<evidence type="ECO:0000303" key="4">
    <source>
    </source>
</evidence>
<evidence type="ECO:0000305" key="5"/>
<evidence type="ECO:0000305" key="6">
    <source>
    </source>
</evidence>
<protein>
    <recommendedName>
        <fullName evidence="4">Phospholipase A2 inhibitor gammaCdcPLI</fullName>
    </recommendedName>
    <alternativeName>
        <fullName evidence="2">gamma-PLI</fullName>
    </alternativeName>
</protein>
<proteinExistence type="evidence at protein level"/>
<feature type="chain" id="PRO_0000433785" description="Phospholipase A2 inhibitor gammaCdcPLI" evidence="3">
    <location>
        <begin position="1"/>
        <end position="95"/>
    </location>
</feature>
<feature type="disulfide bond" evidence="1">
    <location>
        <begin position="2"/>
        <end position="26"/>
    </location>
</feature>
<feature type="disulfide bond" evidence="1">
    <location>
        <begin position="5"/>
        <end position="12"/>
    </location>
</feature>
<feature type="disulfide bond" evidence="1">
    <location>
        <begin position="19"/>
        <end position="30"/>
    </location>
</feature>
<feature type="disulfide bond" evidence="1">
    <location>
        <begin position="36"/>
        <end status="unknown"/>
    </location>
</feature>
<feature type="disulfide bond" evidence="1">
    <location>
        <begin position="40"/>
        <end status="unknown"/>
    </location>
</feature>
<feature type="disulfide bond" evidence="1">
    <location>
        <begin position="61"/>
        <end position="77"/>
    </location>
</feature>
<feature type="disulfide bond" evidence="1">
    <location>
        <begin position="81"/>
        <end status="unknown"/>
    </location>
</feature>
<feature type="non-consecutive residues" evidence="4">
    <location>
        <begin position="28"/>
        <end position="29"/>
    </location>
</feature>
<feature type="non-consecutive residues" evidence="4">
    <location>
        <begin position="37"/>
        <end position="38"/>
    </location>
</feature>
<feature type="non-consecutive residues" evidence="4">
    <location>
        <begin position="52"/>
        <end position="53"/>
    </location>
</feature>
<feature type="non-consecutive residues" evidence="4">
    <location>
        <begin position="62"/>
        <end position="63"/>
    </location>
</feature>
<feature type="non-terminal residue" evidence="4">
    <location>
        <position position="1"/>
    </location>
</feature>
<feature type="non-terminal residue" evidence="4">
    <location>
        <position position="95"/>
    </location>
</feature>
<comment type="function">
    <text evidence="3">Inhibits the enzymatic activity of basic and acidic PLA2 from B.jararacussu and B.pauloensis, respectively, in a dose-dependent manner. Also inhibits myotoxicity and cytotoxicity of BnSp-7 of B.pauloensis.</text>
</comment>
<comment type="subunit">
    <text evidence="3">Forms dimers or higher order oligomers in a temperature-dependent manner in vitro.</text>
</comment>
<comment type="subcellular location">
    <subcellularLocation>
        <location evidence="3">Secreted</location>
    </subcellularLocation>
    <text evidence="3">Secreted in blood plasma.</text>
</comment>
<comment type="tissue specificity">
    <text evidence="6">Expressed by the liver.</text>
</comment>
<comment type="mass spectrometry" mass="22340.0" method="MALDI" evidence="3"/>
<comment type="similarity">
    <text evidence="5">Belongs to the CNF-like-inhibitor family.</text>
</comment>
<sequence length="95" mass="10497">SCDFCHNIGKDCDGYEEECSSPEDVCGKNCFSSSICKELCEDQPEPGEPLSKDSTEYEAICKYEQFPGDISYNLKGCVSSCPLLSLSNATFEQNR</sequence>
<organism evidence="4">
    <name type="scientific">Crotalus durissus collilineatus</name>
    <name type="common">Brazilian rattlesnake</name>
    <dbReference type="NCBI Taxonomy" id="221569"/>
    <lineage>
        <taxon>Eukaryota</taxon>
        <taxon>Metazoa</taxon>
        <taxon>Chordata</taxon>
        <taxon>Craniata</taxon>
        <taxon>Vertebrata</taxon>
        <taxon>Euteleostomi</taxon>
        <taxon>Lepidosauria</taxon>
        <taxon>Squamata</taxon>
        <taxon>Bifurcata</taxon>
        <taxon>Unidentata</taxon>
        <taxon>Episquamata</taxon>
        <taxon>Toxicofera</taxon>
        <taxon>Serpentes</taxon>
        <taxon>Colubroidea</taxon>
        <taxon>Viperidae</taxon>
        <taxon>Crotalinae</taxon>
        <taxon>Crotalus</taxon>
    </lineage>
</organism>
<reference key="1">
    <citation type="journal article" date="2014" name="Toxicon">
        <title>Isolation and biochemical characterization of a gamma-type phospholipase A2 inhibitor from Crotalus durissus collilineatus snake serum.</title>
        <authorList>
            <person name="Gimenes S.N."/>
            <person name="Ferreira F.B."/>
            <person name="Silveira A.C."/>
            <person name="Rodrigues R.S."/>
            <person name="Yoneyama K.A."/>
            <person name="Izabel Dos Santos J."/>
            <person name="Fontes M.R."/>
            <person name="de Campos Brites V.L."/>
            <person name="Santos A.L."/>
            <person name="Borges M.H."/>
            <person name="Lopes D.S."/>
            <person name="Rodrigues V.M."/>
        </authorList>
    </citation>
    <scope>PROTEIN SEQUENCE</scope>
    <scope>FUNCTION</scope>
    <scope>SUBUNIT</scope>
    <scope>SUBCELLULAR LOCATION</scope>
    <scope>MASS SPECTROMETRY</scope>
    <scope>IDENTIFICATION BY MASS SPECTROMETRY</scope>
    <source>
        <tissue evidence="4">Serum</tissue>
    </source>
</reference>
<dbReference type="GO" id="GO:0005576">
    <property type="term" value="C:extracellular region"/>
    <property type="evidence" value="ECO:0007669"/>
    <property type="project" value="UniProtKB-SubCell"/>
</dbReference>
<dbReference type="GO" id="GO:0019834">
    <property type="term" value="F:phospholipase A2 inhibitor activity"/>
    <property type="evidence" value="ECO:0007669"/>
    <property type="project" value="UniProtKB-KW"/>
</dbReference>
<dbReference type="InterPro" id="IPR004126">
    <property type="entry name" value="PLipase_A2_inh_N"/>
</dbReference>
<dbReference type="Pfam" id="PF02988">
    <property type="entry name" value="PLA2_inh"/>
    <property type="match status" value="1"/>
</dbReference>
<keyword id="KW-0903">Direct protein sequencing</keyword>
<keyword id="KW-1015">Disulfide bond</keyword>
<keyword id="KW-0593">Phospholipase A2 inhibitor</keyword>
<keyword id="KW-0964">Secreted</keyword>